<organism>
    <name type="scientific">Pseudomonas paraeruginosa (strain DSM 24068 / PA7)</name>
    <name type="common">Pseudomonas aeruginosa (strain PA7)</name>
    <dbReference type="NCBI Taxonomy" id="381754"/>
    <lineage>
        <taxon>Bacteria</taxon>
        <taxon>Pseudomonadati</taxon>
        <taxon>Pseudomonadota</taxon>
        <taxon>Gammaproteobacteria</taxon>
        <taxon>Pseudomonadales</taxon>
        <taxon>Pseudomonadaceae</taxon>
        <taxon>Pseudomonas</taxon>
        <taxon>Pseudomonas paraeruginosa</taxon>
    </lineage>
</organism>
<protein>
    <recommendedName>
        <fullName evidence="1">Thiosulfate sulfurtransferase GlpE</fullName>
        <ecNumber evidence="1">2.8.1.1</ecNumber>
    </recommendedName>
</protein>
<reference key="1">
    <citation type="submission" date="2007-06" db="EMBL/GenBank/DDBJ databases">
        <authorList>
            <person name="Dodson R.J."/>
            <person name="Harkins D."/>
            <person name="Paulsen I.T."/>
        </authorList>
    </citation>
    <scope>NUCLEOTIDE SEQUENCE [LARGE SCALE GENOMIC DNA]</scope>
    <source>
        <strain>DSM 24068 / PA7</strain>
    </source>
</reference>
<sequence>MSDTFQRIAPEQARQLRENGAQVVDIRDPQSYALGHISGSRHIDNHSVVDFIAAADLDAPLVVVCYHGNSSQSAAAYFIQQGFSDVYSLDGGFELWRSVYPADTSTGEAE</sequence>
<comment type="function">
    <text evidence="1">Transferase that catalyzes the transfer of sulfur from thiosulfate to thiophilic acceptors such as cyanide or dithiols. May function in a CysM-independent thiosulfate assimilation pathway by catalyzing the conversion of thiosulfate to sulfite, which can then be used for L-cysteine biosynthesis.</text>
</comment>
<comment type="catalytic activity">
    <reaction evidence="1">
        <text>thiosulfate + hydrogen cyanide = thiocyanate + sulfite + 2 H(+)</text>
        <dbReference type="Rhea" id="RHEA:16881"/>
        <dbReference type="ChEBI" id="CHEBI:15378"/>
        <dbReference type="ChEBI" id="CHEBI:17359"/>
        <dbReference type="ChEBI" id="CHEBI:18022"/>
        <dbReference type="ChEBI" id="CHEBI:18407"/>
        <dbReference type="ChEBI" id="CHEBI:33542"/>
        <dbReference type="EC" id="2.8.1.1"/>
    </reaction>
</comment>
<comment type="catalytic activity">
    <reaction evidence="1">
        <text>thiosulfate + [thioredoxin]-dithiol = [thioredoxin]-disulfide + hydrogen sulfide + sulfite + 2 H(+)</text>
        <dbReference type="Rhea" id="RHEA:83859"/>
        <dbReference type="Rhea" id="RHEA-COMP:10698"/>
        <dbReference type="Rhea" id="RHEA-COMP:10700"/>
        <dbReference type="ChEBI" id="CHEBI:15378"/>
        <dbReference type="ChEBI" id="CHEBI:17359"/>
        <dbReference type="ChEBI" id="CHEBI:29919"/>
        <dbReference type="ChEBI" id="CHEBI:29950"/>
        <dbReference type="ChEBI" id="CHEBI:33542"/>
        <dbReference type="ChEBI" id="CHEBI:50058"/>
    </reaction>
</comment>
<comment type="subcellular location">
    <subcellularLocation>
        <location evidence="1">Cytoplasm</location>
    </subcellularLocation>
</comment>
<comment type="similarity">
    <text evidence="1">Belongs to the GlpE family.</text>
</comment>
<feature type="chain" id="PRO_1000062967" description="Thiosulfate sulfurtransferase GlpE">
    <location>
        <begin position="1"/>
        <end position="110"/>
    </location>
</feature>
<feature type="domain" description="Rhodanese" evidence="1">
    <location>
        <begin position="17"/>
        <end position="105"/>
    </location>
</feature>
<feature type="active site" description="Cysteine persulfide intermediate" evidence="1">
    <location>
        <position position="65"/>
    </location>
</feature>
<evidence type="ECO:0000255" key="1">
    <source>
        <dbReference type="HAMAP-Rule" id="MF_01009"/>
    </source>
</evidence>
<accession>A6UZ93</accession>
<proteinExistence type="inferred from homology"/>
<dbReference type="EC" id="2.8.1.1" evidence="1"/>
<dbReference type="EMBL" id="CP000744">
    <property type="protein sequence ID" value="ABR81766.1"/>
    <property type="molecule type" value="Genomic_DNA"/>
</dbReference>
<dbReference type="RefSeq" id="WP_003149627.1">
    <property type="nucleotide sequence ID" value="NC_009656.1"/>
</dbReference>
<dbReference type="SMR" id="A6UZ93"/>
<dbReference type="KEGG" id="pap:PSPA7_0733"/>
<dbReference type="HOGENOM" id="CLU_089574_14_0_6"/>
<dbReference type="Proteomes" id="UP000001582">
    <property type="component" value="Chromosome"/>
</dbReference>
<dbReference type="GO" id="GO:0005737">
    <property type="term" value="C:cytoplasm"/>
    <property type="evidence" value="ECO:0007669"/>
    <property type="project" value="UniProtKB-SubCell"/>
</dbReference>
<dbReference type="GO" id="GO:0004792">
    <property type="term" value="F:thiosulfate-cyanide sulfurtransferase activity"/>
    <property type="evidence" value="ECO:0007669"/>
    <property type="project" value="UniProtKB-UniRule"/>
</dbReference>
<dbReference type="GO" id="GO:0006071">
    <property type="term" value="P:glycerol metabolic process"/>
    <property type="evidence" value="ECO:0007669"/>
    <property type="project" value="UniProtKB-UniRule"/>
</dbReference>
<dbReference type="CDD" id="cd01444">
    <property type="entry name" value="GlpE_ST"/>
    <property type="match status" value="1"/>
</dbReference>
<dbReference type="Gene3D" id="3.40.250.10">
    <property type="entry name" value="Rhodanese-like domain"/>
    <property type="match status" value="1"/>
</dbReference>
<dbReference type="HAMAP" id="MF_01009">
    <property type="entry name" value="Thiosulf_sulfurtr"/>
    <property type="match status" value="1"/>
</dbReference>
<dbReference type="InterPro" id="IPR050229">
    <property type="entry name" value="GlpE_sulfurtransferase"/>
</dbReference>
<dbReference type="InterPro" id="IPR001763">
    <property type="entry name" value="Rhodanese-like_dom"/>
</dbReference>
<dbReference type="InterPro" id="IPR036873">
    <property type="entry name" value="Rhodanese-like_dom_sf"/>
</dbReference>
<dbReference type="InterPro" id="IPR023695">
    <property type="entry name" value="Thiosulf_sulfurTrfase"/>
</dbReference>
<dbReference type="NCBIfam" id="NF001195">
    <property type="entry name" value="PRK00162.1"/>
    <property type="match status" value="1"/>
</dbReference>
<dbReference type="PANTHER" id="PTHR43031">
    <property type="entry name" value="FAD-DEPENDENT OXIDOREDUCTASE"/>
    <property type="match status" value="1"/>
</dbReference>
<dbReference type="PANTHER" id="PTHR43031:SF6">
    <property type="entry name" value="THIOSULFATE SULFURTRANSFERASE GLPE"/>
    <property type="match status" value="1"/>
</dbReference>
<dbReference type="Pfam" id="PF00581">
    <property type="entry name" value="Rhodanese"/>
    <property type="match status" value="1"/>
</dbReference>
<dbReference type="SMART" id="SM00450">
    <property type="entry name" value="RHOD"/>
    <property type="match status" value="1"/>
</dbReference>
<dbReference type="SUPFAM" id="SSF52821">
    <property type="entry name" value="Rhodanese/Cell cycle control phosphatase"/>
    <property type="match status" value="1"/>
</dbReference>
<dbReference type="PROSITE" id="PS50206">
    <property type="entry name" value="RHODANESE_3"/>
    <property type="match status" value="1"/>
</dbReference>
<keyword id="KW-0963">Cytoplasm</keyword>
<keyword id="KW-0808">Transferase</keyword>
<gene>
    <name evidence="1" type="primary">glpE</name>
    <name type="ordered locus">PSPA7_0733</name>
</gene>
<name>GLPE_PSEP7</name>